<name>PSAJ_PROMP</name>
<feature type="chain" id="PRO_0000207823" description="Photosystem I reaction center subunit IX">
    <location>
        <begin position="1"/>
        <end position="44"/>
    </location>
</feature>
<feature type="transmembrane region" description="Helical" evidence="1">
    <location>
        <begin position="9"/>
        <end position="29"/>
    </location>
</feature>
<keyword id="KW-0472">Membrane</keyword>
<keyword id="KW-0602">Photosynthesis</keyword>
<keyword id="KW-0603">Photosystem I</keyword>
<keyword id="KW-0793">Thylakoid</keyword>
<keyword id="KW-0812">Transmembrane</keyword>
<keyword id="KW-1133">Transmembrane helix</keyword>
<comment type="function">
    <text evidence="1">May help in the organization of the PsaE and PsaF subunits.</text>
</comment>
<comment type="subcellular location">
    <subcellularLocation>
        <location evidence="1">Cellular thylakoid membrane</location>
        <topology evidence="1">Single-pass membrane protein</topology>
    </subcellularLocation>
</comment>
<comment type="similarity">
    <text evidence="1">Belongs to the PsaJ family.</text>
</comment>
<protein>
    <recommendedName>
        <fullName evidence="1">Photosystem I reaction center subunit IX</fullName>
    </recommendedName>
</protein>
<proteinExistence type="inferred from homology"/>
<accession>Q7V2K8</accession>
<sequence>MLKIFNTKFIRSAPVVAAVWLSLTAGIIIEFNRFFPDLLFHPMS</sequence>
<reference key="1">
    <citation type="journal article" date="2003" name="Nature">
        <title>Genome divergence in two Prochlorococcus ecotypes reflects oceanic niche differentiation.</title>
        <authorList>
            <person name="Rocap G."/>
            <person name="Larimer F.W."/>
            <person name="Lamerdin J.E."/>
            <person name="Malfatti S."/>
            <person name="Chain P."/>
            <person name="Ahlgren N.A."/>
            <person name="Arellano A."/>
            <person name="Coleman M."/>
            <person name="Hauser L."/>
            <person name="Hess W.R."/>
            <person name="Johnson Z.I."/>
            <person name="Land M.L."/>
            <person name="Lindell D."/>
            <person name="Post A.F."/>
            <person name="Regala W."/>
            <person name="Shah M."/>
            <person name="Shaw S.L."/>
            <person name="Steglich C."/>
            <person name="Sullivan M.B."/>
            <person name="Ting C.S."/>
            <person name="Tolonen A."/>
            <person name="Webb E.A."/>
            <person name="Zinser E.R."/>
            <person name="Chisholm S.W."/>
        </authorList>
    </citation>
    <scope>NUCLEOTIDE SEQUENCE [LARGE SCALE GENOMIC DNA]</scope>
    <source>
        <strain>CCMP1986 / NIES-2087 / MED4</strain>
    </source>
</reference>
<dbReference type="EMBL" id="BX548174">
    <property type="protein sequence ID" value="CAE18927.1"/>
    <property type="molecule type" value="Genomic_DNA"/>
</dbReference>
<dbReference type="RefSeq" id="WP_011132104.1">
    <property type="nucleotide sequence ID" value="NC_005072.1"/>
</dbReference>
<dbReference type="SMR" id="Q7V2K8"/>
<dbReference type="STRING" id="59919.PMM0468"/>
<dbReference type="KEGG" id="pmm:PMM0468"/>
<dbReference type="eggNOG" id="ENOG5033A5A">
    <property type="taxonomic scope" value="Bacteria"/>
</dbReference>
<dbReference type="HOGENOM" id="CLU_212133_1_1_3"/>
<dbReference type="OrthoDB" id="532702at2"/>
<dbReference type="Proteomes" id="UP000001026">
    <property type="component" value="Chromosome"/>
</dbReference>
<dbReference type="GO" id="GO:0009522">
    <property type="term" value="C:photosystem I"/>
    <property type="evidence" value="ECO:0007669"/>
    <property type="project" value="UniProtKB-KW"/>
</dbReference>
<dbReference type="GO" id="GO:0031676">
    <property type="term" value="C:plasma membrane-derived thylakoid membrane"/>
    <property type="evidence" value="ECO:0007669"/>
    <property type="project" value="UniProtKB-SubCell"/>
</dbReference>
<dbReference type="GO" id="GO:0015979">
    <property type="term" value="P:photosynthesis"/>
    <property type="evidence" value="ECO:0007669"/>
    <property type="project" value="UniProtKB-UniRule"/>
</dbReference>
<dbReference type="Gene3D" id="1.20.5.510">
    <property type="entry name" value="Single helix bin"/>
    <property type="match status" value="1"/>
</dbReference>
<dbReference type="HAMAP" id="MF_00522">
    <property type="entry name" value="PSI_PsaJ"/>
    <property type="match status" value="1"/>
</dbReference>
<dbReference type="InterPro" id="IPR002615">
    <property type="entry name" value="PSI_PsaJ"/>
</dbReference>
<dbReference type="InterPro" id="IPR036062">
    <property type="entry name" value="PSI_PsaJ_sf"/>
</dbReference>
<dbReference type="NCBIfam" id="NF002743">
    <property type="entry name" value="PRK02733.1"/>
    <property type="match status" value="1"/>
</dbReference>
<dbReference type="PANTHER" id="PTHR36082">
    <property type="match status" value="1"/>
</dbReference>
<dbReference type="PANTHER" id="PTHR36082:SF2">
    <property type="entry name" value="PHOTOSYSTEM I REACTION CENTER SUBUNIT IX"/>
    <property type="match status" value="1"/>
</dbReference>
<dbReference type="Pfam" id="PF01701">
    <property type="entry name" value="PSI_PsaJ"/>
    <property type="match status" value="1"/>
</dbReference>
<dbReference type="SUPFAM" id="SSF81544">
    <property type="entry name" value="Subunit IX of photosystem I reaction centre, PsaJ"/>
    <property type="match status" value="1"/>
</dbReference>
<organism>
    <name type="scientific">Prochlorococcus marinus subsp. pastoris (strain CCMP1986 / NIES-2087 / MED4)</name>
    <dbReference type="NCBI Taxonomy" id="59919"/>
    <lineage>
        <taxon>Bacteria</taxon>
        <taxon>Bacillati</taxon>
        <taxon>Cyanobacteriota</taxon>
        <taxon>Cyanophyceae</taxon>
        <taxon>Synechococcales</taxon>
        <taxon>Prochlorococcaceae</taxon>
        <taxon>Prochlorococcus</taxon>
    </lineage>
</organism>
<gene>
    <name evidence="1" type="primary">psaJ</name>
    <name type="ordered locus">PMM0468</name>
</gene>
<evidence type="ECO:0000255" key="1">
    <source>
        <dbReference type="HAMAP-Rule" id="MF_00522"/>
    </source>
</evidence>